<reference key="1">
    <citation type="journal article" date="1993" name="Biochem. Biophys. Res. Commun.">
        <title>Molecular cloning and structural analysis of canine gastric H+,K(+)-ATPase.</title>
        <authorList>
            <person name="Song I."/>
            <person name="Mortell M.P."/>
            <person name="Gantz I."/>
            <person name="Brown D.R."/>
            <person name="Yamada T."/>
        </authorList>
    </citation>
    <scope>NUCLEOTIDE SEQUENCE [MRNA]</scope>
    <source>
        <tissue>Stomach</tissue>
    </source>
</reference>
<dbReference type="EC" id="7.2.2.19" evidence="2"/>
<dbReference type="EMBL" id="L11568">
    <property type="protein sequence ID" value="AAA30848.1"/>
    <property type="molecule type" value="mRNA"/>
</dbReference>
<dbReference type="PIR" id="JN0903">
    <property type="entry name" value="JN0903"/>
</dbReference>
<dbReference type="RefSeq" id="NP_001003342.1">
    <property type="nucleotide sequence ID" value="NM_001003342.1"/>
</dbReference>
<dbReference type="SMR" id="P50996"/>
<dbReference type="FunCoup" id="P50996">
    <property type="interactions" value="15"/>
</dbReference>
<dbReference type="STRING" id="9615.ENSCAFP00000055733"/>
<dbReference type="PaxDb" id="9612-ENSCAFP00000040362"/>
<dbReference type="GeneID" id="431686"/>
<dbReference type="KEGG" id="cfa:431686"/>
<dbReference type="CTD" id="495"/>
<dbReference type="eggNOG" id="KOG0203">
    <property type="taxonomic scope" value="Eukaryota"/>
</dbReference>
<dbReference type="InParanoid" id="P50996"/>
<dbReference type="OrthoDB" id="158672at2759"/>
<dbReference type="Proteomes" id="UP000002254">
    <property type="component" value="Unplaced"/>
</dbReference>
<dbReference type="Proteomes" id="UP000694429">
    <property type="component" value="Unplaced"/>
</dbReference>
<dbReference type="Proteomes" id="UP000694542">
    <property type="component" value="Unplaced"/>
</dbReference>
<dbReference type="Proteomes" id="UP000805418">
    <property type="component" value="Unplaced"/>
</dbReference>
<dbReference type="GO" id="GO:0016324">
    <property type="term" value="C:apical plasma membrane"/>
    <property type="evidence" value="ECO:0007669"/>
    <property type="project" value="UniProtKB-SubCell"/>
</dbReference>
<dbReference type="GO" id="GO:0005886">
    <property type="term" value="C:plasma membrane"/>
    <property type="evidence" value="ECO:0000318"/>
    <property type="project" value="GO_Central"/>
</dbReference>
<dbReference type="GO" id="GO:0005524">
    <property type="term" value="F:ATP binding"/>
    <property type="evidence" value="ECO:0007669"/>
    <property type="project" value="UniProtKB-KW"/>
</dbReference>
<dbReference type="GO" id="GO:0016887">
    <property type="term" value="F:ATP hydrolysis activity"/>
    <property type="evidence" value="ECO:0007669"/>
    <property type="project" value="InterPro"/>
</dbReference>
<dbReference type="GO" id="GO:0000287">
    <property type="term" value="F:magnesium ion binding"/>
    <property type="evidence" value="ECO:0000250"/>
    <property type="project" value="UniProtKB"/>
</dbReference>
<dbReference type="GO" id="GO:0008900">
    <property type="term" value="F:P-type potassium:proton transporter activity"/>
    <property type="evidence" value="ECO:0000318"/>
    <property type="project" value="GO_Central"/>
</dbReference>
<dbReference type="GO" id="GO:0005391">
    <property type="term" value="F:P-type sodium:potassium-exchanging transporter activity"/>
    <property type="evidence" value="ECO:0000318"/>
    <property type="project" value="GO_Central"/>
</dbReference>
<dbReference type="GO" id="GO:0030955">
    <property type="term" value="F:potassium ion binding"/>
    <property type="evidence" value="ECO:0000250"/>
    <property type="project" value="UniProtKB"/>
</dbReference>
<dbReference type="GO" id="GO:0030007">
    <property type="term" value="P:intracellular potassium ion homeostasis"/>
    <property type="evidence" value="ECO:0000318"/>
    <property type="project" value="GO_Central"/>
</dbReference>
<dbReference type="GO" id="GO:0006883">
    <property type="term" value="P:intracellular sodium ion homeostasis"/>
    <property type="evidence" value="ECO:0000318"/>
    <property type="project" value="GO_Central"/>
</dbReference>
<dbReference type="GO" id="GO:1990573">
    <property type="term" value="P:potassium ion import across plasma membrane"/>
    <property type="evidence" value="ECO:0000318"/>
    <property type="project" value="GO_Central"/>
</dbReference>
<dbReference type="GO" id="GO:1902600">
    <property type="term" value="P:proton transmembrane transport"/>
    <property type="evidence" value="ECO:0000318"/>
    <property type="project" value="GO_Central"/>
</dbReference>
<dbReference type="GO" id="GO:0036376">
    <property type="term" value="P:sodium ion export across plasma membrane"/>
    <property type="evidence" value="ECO:0000318"/>
    <property type="project" value="GO_Central"/>
</dbReference>
<dbReference type="CDD" id="cd02608">
    <property type="entry name" value="P-type_ATPase_Na-K_like"/>
    <property type="match status" value="1"/>
</dbReference>
<dbReference type="FunFam" id="3.40.50.1000:FF:000001">
    <property type="entry name" value="Phospholipid-transporting ATPase IC"/>
    <property type="match status" value="1"/>
</dbReference>
<dbReference type="FunFam" id="1.20.1110.10:FF:000079">
    <property type="entry name" value="Sodium/potassium-transporting ATPase subunit alpha"/>
    <property type="match status" value="1"/>
</dbReference>
<dbReference type="FunFam" id="2.70.150.10:FF:000003">
    <property type="entry name" value="Sodium/potassium-transporting ATPase subunit alpha"/>
    <property type="match status" value="1"/>
</dbReference>
<dbReference type="FunFam" id="3.40.1110.10:FF:000001">
    <property type="entry name" value="Sodium/potassium-transporting ATPase subunit alpha"/>
    <property type="match status" value="1"/>
</dbReference>
<dbReference type="FunFam" id="3.40.50.1000:FF:000004">
    <property type="entry name" value="Sodium/potassium-transporting ATPase subunit alpha"/>
    <property type="match status" value="1"/>
</dbReference>
<dbReference type="FunFam" id="1.20.1110.10:FF:000095">
    <property type="entry name" value="Sodium/potassium-transporting ATPase subunit alpha-1"/>
    <property type="match status" value="1"/>
</dbReference>
<dbReference type="Gene3D" id="3.40.1110.10">
    <property type="entry name" value="Calcium-transporting ATPase, cytoplasmic domain N"/>
    <property type="match status" value="1"/>
</dbReference>
<dbReference type="Gene3D" id="2.70.150.10">
    <property type="entry name" value="Calcium-transporting ATPase, cytoplasmic transduction domain A"/>
    <property type="match status" value="1"/>
</dbReference>
<dbReference type="Gene3D" id="1.20.1110.10">
    <property type="entry name" value="Calcium-transporting ATPase, transmembrane domain"/>
    <property type="match status" value="1"/>
</dbReference>
<dbReference type="Gene3D" id="3.40.50.1000">
    <property type="entry name" value="HAD superfamily/HAD-like"/>
    <property type="match status" value="1"/>
</dbReference>
<dbReference type="InterPro" id="IPR006068">
    <property type="entry name" value="ATPase_P-typ_cation-transptr_C"/>
</dbReference>
<dbReference type="InterPro" id="IPR004014">
    <property type="entry name" value="ATPase_P-typ_cation-transptr_N"/>
</dbReference>
<dbReference type="InterPro" id="IPR023299">
    <property type="entry name" value="ATPase_P-typ_cyto_dom_N"/>
</dbReference>
<dbReference type="InterPro" id="IPR015127">
    <property type="entry name" value="ATPase_P-typ_H/K-transp_N"/>
</dbReference>
<dbReference type="InterPro" id="IPR018303">
    <property type="entry name" value="ATPase_P-typ_P_site"/>
</dbReference>
<dbReference type="InterPro" id="IPR023298">
    <property type="entry name" value="ATPase_P-typ_TM_dom_sf"/>
</dbReference>
<dbReference type="InterPro" id="IPR008250">
    <property type="entry name" value="ATPase_P-typ_transduc_dom_A_sf"/>
</dbReference>
<dbReference type="InterPro" id="IPR050510">
    <property type="entry name" value="Cation_transp_ATPase_P-type"/>
</dbReference>
<dbReference type="InterPro" id="IPR036412">
    <property type="entry name" value="HAD-like_sf"/>
</dbReference>
<dbReference type="InterPro" id="IPR023214">
    <property type="entry name" value="HAD_sf"/>
</dbReference>
<dbReference type="InterPro" id="IPR005775">
    <property type="entry name" value="P-type_ATPase_IIC"/>
</dbReference>
<dbReference type="InterPro" id="IPR001757">
    <property type="entry name" value="P_typ_ATPase"/>
</dbReference>
<dbReference type="InterPro" id="IPR044492">
    <property type="entry name" value="P_typ_ATPase_HD_dom"/>
</dbReference>
<dbReference type="NCBIfam" id="TIGR01106">
    <property type="entry name" value="ATPase-IIC_X-K"/>
    <property type="match status" value="1"/>
</dbReference>
<dbReference type="NCBIfam" id="TIGR01494">
    <property type="entry name" value="ATPase_P-type"/>
    <property type="match status" value="2"/>
</dbReference>
<dbReference type="PANTHER" id="PTHR43294:SF10">
    <property type="entry name" value="POTASSIUM-TRANSPORTING ATPASE ALPHA CHAIN 1"/>
    <property type="match status" value="1"/>
</dbReference>
<dbReference type="PANTHER" id="PTHR43294">
    <property type="entry name" value="SODIUM/POTASSIUM-TRANSPORTING ATPASE SUBUNIT ALPHA"/>
    <property type="match status" value="1"/>
</dbReference>
<dbReference type="Pfam" id="PF13246">
    <property type="entry name" value="Cation_ATPase"/>
    <property type="match status" value="1"/>
</dbReference>
<dbReference type="Pfam" id="PF00689">
    <property type="entry name" value="Cation_ATPase_C"/>
    <property type="match status" value="1"/>
</dbReference>
<dbReference type="Pfam" id="PF00690">
    <property type="entry name" value="Cation_ATPase_N"/>
    <property type="match status" value="1"/>
</dbReference>
<dbReference type="Pfam" id="PF00122">
    <property type="entry name" value="E1-E2_ATPase"/>
    <property type="match status" value="1"/>
</dbReference>
<dbReference type="Pfam" id="PF09040">
    <property type="entry name" value="H-K_ATPase_N"/>
    <property type="match status" value="1"/>
</dbReference>
<dbReference type="Pfam" id="PF00702">
    <property type="entry name" value="Hydrolase"/>
    <property type="match status" value="1"/>
</dbReference>
<dbReference type="PRINTS" id="PR00119">
    <property type="entry name" value="CATATPASE"/>
</dbReference>
<dbReference type="PRINTS" id="PR00121">
    <property type="entry name" value="NAKATPASE"/>
</dbReference>
<dbReference type="SFLD" id="SFLDS00003">
    <property type="entry name" value="Haloacid_Dehalogenase"/>
    <property type="match status" value="1"/>
</dbReference>
<dbReference type="SFLD" id="SFLDF00027">
    <property type="entry name" value="p-type_atpase"/>
    <property type="match status" value="1"/>
</dbReference>
<dbReference type="SMART" id="SM00831">
    <property type="entry name" value="Cation_ATPase_N"/>
    <property type="match status" value="1"/>
</dbReference>
<dbReference type="SUPFAM" id="SSF81653">
    <property type="entry name" value="Calcium ATPase, transduction domain A"/>
    <property type="match status" value="1"/>
</dbReference>
<dbReference type="SUPFAM" id="SSF81665">
    <property type="entry name" value="Calcium ATPase, transmembrane domain M"/>
    <property type="match status" value="1"/>
</dbReference>
<dbReference type="SUPFAM" id="SSF56784">
    <property type="entry name" value="HAD-like"/>
    <property type="match status" value="1"/>
</dbReference>
<dbReference type="SUPFAM" id="SSF81660">
    <property type="entry name" value="Metal cation-transporting ATPase, ATP-binding domain N"/>
    <property type="match status" value="1"/>
</dbReference>
<dbReference type="PROSITE" id="PS00154">
    <property type="entry name" value="ATPASE_E1_E2"/>
    <property type="match status" value="1"/>
</dbReference>
<organism>
    <name type="scientific">Canis lupus familiaris</name>
    <name type="common">Dog</name>
    <name type="synonym">Canis familiaris</name>
    <dbReference type="NCBI Taxonomy" id="9615"/>
    <lineage>
        <taxon>Eukaryota</taxon>
        <taxon>Metazoa</taxon>
        <taxon>Chordata</taxon>
        <taxon>Craniata</taxon>
        <taxon>Vertebrata</taxon>
        <taxon>Euteleostomi</taxon>
        <taxon>Mammalia</taxon>
        <taxon>Eutheria</taxon>
        <taxon>Laurasiatheria</taxon>
        <taxon>Carnivora</taxon>
        <taxon>Caniformia</taxon>
        <taxon>Canidae</taxon>
        <taxon>Canis</taxon>
    </lineage>
</organism>
<sequence>MGKAENYEMYSVELGPGPGGDMAAKMSKKKAGKGGGKKKEKLENMKKEMEINDHQLSVAELEQKYQTSATKGLSASLAADLLLRDGPNALRPPRGTPEYVKFARQLAGGLQCLMWVAAAICLIAFAIQASEGDLTTDDNLYLALALIAVVVVTGCFGYYQEFKSTNIIASFKNLVPQQATVIRDGDKFQINADQLVVGDLVEMKGGDRVPADIRILQAQGCKVDNSSLTGESEPQTRSPECTHESPLETRNIALFSTMCLEGTAQGLVVNTGDRTIIGRIASLASGVENEKTPIAIEIEHFVDIIAGLAILFGATFFVVAMCIGYTFLRAMVFFMAIVVAYVPEGLLATVTVCLSLTAKRLASKNCVVKNLEAVETLGSKSVICSDKTGTLTQNSMTVSNLWFDNHIHTADTTEDQSGQKFDQSSETWRALCRVLTLCNRAAFKSGQDAVPVPKRIVIGDASETALLKFSELTLGNAMGYRERFPKVCEIPFNSTNKFQLSIHTLEDPRDPRHVLVMKGAPERVLERCSSILIKGQELPLDEQWREAFQTAYLSLGGLGERVLGFCQLYLSEKDYPPGYAFDVEAMNFPTSGLCFAGLVSMIDPPRATVPDAVLKCRTAGIRVIMVTGDHPITAKAIAASVGIISEGSETVEDIAARLRVPVDQVNRKDARACVINGMQLKDMDPSELVEALRTHPEMVFARTSPQQKLVIVESCQRLGAIVAVTGDGVNDSPALKKADIGVAMGIAGSDAAKNAADMILLDDNFASIVTGVEQGRLIFDNLKKSIAYTLTKNIPELTPYLIYITVSVPLPLGCITILFIELCTDIFPSVSLAYEKAESDIMHLRPRNPKRDRLVNEPLAAYSYFQIGAIQSFAGFTDYFTAMAQEGWFPLLCVGLRPYWENHHLQDLQDSYGQEWTFGQRLYQQYTCYTVFFISIEMCQIADVLIRKTRRLSAFQQGFFRNRILVIAIVFQVCIGCFLCYCPGMPNIFNFMPIRYQWWLVPMPFGLLIFVYDEIRKLGVRCCPGSWWDQELYY</sequence>
<evidence type="ECO:0000250" key="1"/>
<evidence type="ECO:0000250" key="2">
    <source>
        <dbReference type="UniProtKB" id="P09626"/>
    </source>
</evidence>
<evidence type="ECO:0000250" key="3">
    <source>
        <dbReference type="UniProtKB" id="P19156"/>
    </source>
</evidence>
<evidence type="ECO:0000250" key="4">
    <source>
        <dbReference type="UniProtKB" id="P20648"/>
    </source>
</evidence>
<evidence type="ECO:0000250" key="5">
    <source>
        <dbReference type="UniProtKB" id="P50993"/>
    </source>
</evidence>
<evidence type="ECO:0000250" key="6">
    <source>
        <dbReference type="UniProtKB" id="Q64436"/>
    </source>
</evidence>
<evidence type="ECO:0000250" key="7">
    <source>
        <dbReference type="UniProtKB" id="Q6PIE5"/>
    </source>
</evidence>
<evidence type="ECO:0000255" key="8"/>
<evidence type="ECO:0000256" key="9">
    <source>
        <dbReference type="SAM" id="MobiDB-lite"/>
    </source>
</evidence>
<evidence type="ECO:0000305" key="10"/>
<feature type="chain" id="PRO_0000046252" description="Potassium-transporting ATPase alpha chain 1">
    <location>
        <begin position="1"/>
        <end position="1034"/>
    </location>
</feature>
<feature type="topological domain" description="Cytoplasmic" evidence="8">
    <location>
        <begin position="1"/>
        <end position="97"/>
    </location>
</feature>
<feature type="transmembrane region" description="Helical" evidence="8">
    <location>
        <begin position="98"/>
        <end position="118"/>
    </location>
</feature>
<feature type="topological domain" description="Lumenal" evidence="8">
    <location>
        <begin position="119"/>
        <end position="141"/>
    </location>
</feature>
<feature type="transmembrane region" description="Helical" evidence="8">
    <location>
        <begin position="142"/>
        <end position="162"/>
    </location>
</feature>
<feature type="topological domain" description="Cytoplasmic" evidence="8">
    <location>
        <begin position="163"/>
        <end position="298"/>
    </location>
</feature>
<feature type="transmembrane region" description="Helical" evidence="8">
    <location>
        <begin position="299"/>
        <end position="318"/>
    </location>
</feature>
<feature type="topological domain" description="Lumenal" evidence="8">
    <location>
        <begin position="319"/>
        <end position="330"/>
    </location>
</feature>
<feature type="transmembrane region" description="Helical" evidence="8">
    <location>
        <begin position="331"/>
        <end position="348"/>
    </location>
</feature>
<feature type="topological domain" description="Cytoplasmic" evidence="8">
    <location>
        <begin position="349"/>
        <end position="782"/>
    </location>
</feature>
<feature type="transmembrane region" description="Helical" evidence="8">
    <location>
        <begin position="783"/>
        <end position="802"/>
    </location>
</feature>
<feature type="topological domain" description="Lumenal" evidence="8">
    <location>
        <begin position="803"/>
        <end position="812"/>
    </location>
</feature>
<feature type="transmembrane region" description="Helical" evidence="8">
    <location>
        <begin position="813"/>
        <end position="833"/>
    </location>
</feature>
<feature type="topological domain" description="Cytoplasmic" evidence="8">
    <location>
        <begin position="834"/>
        <end position="853"/>
    </location>
</feature>
<feature type="transmembrane region" description="Helical" evidence="8">
    <location>
        <begin position="854"/>
        <end position="876"/>
    </location>
</feature>
<feature type="topological domain" description="Lumenal" evidence="8">
    <location>
        <begin position="877"/>
        <end position="928"/>
    </location>
</feature>
<feature type="transmembrane region" description="Helical" evidence="8">
    <location>
        <begin position="929"/>
        <end position="948"/>
    </location>
</feature>
<feature type="topological domain" description="Cytoplasmic" evidence="8">
    <location>
        <begin position="949"/>
        <end position="962"/>
    </location>
</feature>
<feature type="transmembrane region" description="Helical" evidence="8">
    <location>
        <begin position="963"/>
        <end position="981"/>
    </location>
</feature>
<feature type="topological domain" description="Lumenal" evidence="8">
    <location>
        <begin position="982"/>
        <end position="996"/>
    </location>
</feature>
<feature type="transmembrane region" description="Helical" evidence="8">
    <location>
        <begin position="997"/>
        <end position="1017"/>
    </location>
</feature>
<feature type="topological domain" description="Cytoplasmic" evidence="8">
    <location>
        <begin position="1018"/>
        <end position="1034"/>
    </location>
</feature>
<feature type="region of interest" description="Disordered" evidence="9">
    <location>
        <begin position="14"/>
        <end position="41"/>
    </location>
</feature>
<feature type="region of interest" description="Disordered" evidence="9">
    <location>
        <begin position="225"/>
        <end position="245"/>
    </location>
</feature>
<feature type="compositionally biased region" description="Basic residues" evidence="9">
    <location>
        <begin position="26"/>
        <end position="39"/>
    </location>
</feature>
<feature type="compositionally biased region" description="Polar residues" evidence="9">
    <location>
        <begin position="225"/>
        <end position="239"/>
    </location>
</feature>
<feature type="active site" description="4-aspartylphosphate intermediate" evidence="3">
    <location>
        <position position="386"/>
    </location>
</feature>
<feature type="binding site" evidence="3">
    <location>
        <position position="339"/>
    </location>
    <ligand>
        <name>K(+)</name>
        <dbReference type="ChEBI" id="CHEBI:29103"/>
    </ligand>
</feature>
<feature type="binding site" evidence="3">
    <location>
        <position position="340"/>
    </location>
    <ligand>
        <name>K(+)</name>
        <dbReference type="ChEBI" id="CHEBI:29103"/>
    </ligand>
</feature>
<feature type="binding site" evidence="3">
    <location>
        <position position="342"/>
    </location>
    <ligand>
        <name>K(+)</name>
        <dbReference type="ChEBI" id="CHEBI:29103"/>
    </ligand>
</feature>
<feature type="binding site" evidence="3">
    <location>
        <position position="344"/>
    </location>
    <ligand>
        <name>K(+)</name>
        <dbReference type="ChEBI" id="CHEBI:29103"/>
    </ligand>
</feature>
<feature type="binding site" evidence="3">
    <location>
        <position position="386"/>
    </location>
    <ligand>
        <name>Mg(2+)</name>
        <dbReference type="ChEBI" id="CHEBI:18420"/>
    </ligand>
</feature>
<feature type="binding site" evidence="3">
    <location>
        <position position="388"/>
    </location>
    <ligand>
        <name>Mg(2+)</name>
        <dbReference type="ChEBI" id="CHEBI:18420"/>
    </ligand>
</feature>
<feature type="binding site" evidence="3">
    <location>
        <position position="727"/>
    </location>
    <ligand>
        <name>Mg(2+)</name>
        <dbReference type="ChEBI" id="CHEBI:18420"/>
    </ligand>
</feature>
<feature type="binding site" evidence="1">
    <location>
        <position position="731"/>
    </location>
    <ligand>
        <name>Mg(2+)</name>
        <dbReference type="ChEBI" id="CHEBI:18420"/>
    </ligand>
</feature>
<feature type="binding site" evidence="3">
    <location>
        <position position="796"/>
    </location>
    <ligand>
        <name>K(+)</name>
        <dbReference type="ChEBI" id="CHEBI:29103"/>
    </ligand>
</feature>
<feature type="binding site" evidence="3">
    <location>
        <position position="821"/>
    </location>
    <ligand>
        <name>K(+)</name>
        <dbReference type="ChEBI" id="CHEBI:29103"/>
    </ligand>
</feature>
<feature type="modified residue" description="Phosphotyrosine" evidence="3">
    <location>
        <position position="7"/>
    </location>
</feature>
<feature type="modified residue" description="Phosphotyrosine" evidence="3">
    <location>
        <position position="10"/>
    </location>
</feature>
<feature type="modified residue" description="Phosphoserine" evidence="3">
    <location>
        <position position="27"/>
    </location>
</feature>
<feature type="modified residue" description="Phosphoserine" evidence="7">
    <location>
        <position position="462"/>
    </location>
</feature>
<feature type="modified residue" description="Phosphoserine" evidence="5">
    <location>
        <position position="600"/>
    </location>
</feature>
<feature type="modified residue" description="Phosphoserine" evidence="2">
    <location>
        <position position="839"/>
    </location>
</feature>
<feature type="modified residue" description="Phosphoserine; by PKA" evidence="1">
    <location>
        <position position="953"/>
    </location>
</feature>
<protein>
    <recommendedName>
        <fullName>Potassium-transporting ATPase alpha chain 1</fullName>
        <ecNumber evidence="2">7.2.2.19</ecNumber>
    </recommendedName>
    <alternativeName>
        <fullName>Gastric H(+)/K(+) ATPase subunit alpha</fullName>
    </alternativeName>
    <alternativeName>
        <fullName>Proton pump</fullName>
    </alternativeName>
</protein>
<name>ATP4A_CANLF</name>
<accession>P50996</accession>
<comment type="function">
    <text evidence="2 3 6">The catalytic subunit of the gastric H(+)/K(+) ATPase pump which transports H(+) ions in exchange for K(+) ions across the apical membrane of parietal cells. Uses ATP as an energy source to pump H(+) ions to the gastric lumen while transporting K(+) ion from the lumen into the cell (By similarity). Remarkably generates a million-fold proton gradient across the gastric parietal cell membrane, acidifying the gastric juice down to pH 1 (By similarity). Within a transport cycle, the transfer of a H(+) ion across the membrane is coupled to ATP hydrolysis and is associated with a transient phosphorylation that shifts the pump conformation from inward-facing (E1) to outward-facing state (E2). The release of the H(+) ion in the stomach lumen is followed by binding of K(+) ion converting the pump conformation back to the E1 state (By similarity).</text>
</comment>
<comment type="catalytic activity">
    <reaction evidence="2">
        <text>K(+)(out) + ATP + H2O + H(+)(in) = K(+)(in) + ADP + phosphate + 2 H(+)(out)</text>
        <dbReference type="Rhea" id="RHEA:22044"/>
        <dbReference type="ChEBI" id="CHEBI:15377"/>
        <dbReference type="ChEBI" id="CHEBI:15378"/>
        <dbReference type="ChEBI" id="CHEBI:29103"/>
        <dbReference type="ChEBI" id="CHEBI:30616"/>
        <dbReference type="ChEBI" id="CHEBI:43474"/>
        <dbReference type="ChEBI" id="CHEBI:456216"/>
        <dbReference type="EC" id="7.2.2.19"/>
    </reaction>
    <physiologicalReaction direction="left-to-right" evidence="2">
        <dbReference type="Rhea" id="RHEA:22045"/>
    </physiologicalReaction>
</comment>
<comment type="subunit">
    <text evidence="3">The gastric H(+)/K(+) ATPase pump is composed of the catalytic alpha subunit ATP4A and the regulatory beta subunit ATP4B. Interacts (via the P-domain) with ATP4B (via N-terminus); this interaction stabilizes the lumenal-open E2 conformation state and prevents the reverse reaction of the transport cycle.</text>
</comment>
<comment type="subcellular location">
    <subcellularLocation>
        <location evidence="4">Apical cell membrane</location>
        <topology evidence="8">Multi-pass membrane protein</topology>
    </subcellularLocation>
    <text evidence="4">Localized in the apical canalicular membrane of parietal cells.</text>
</comment>
<comment type="similarity">
    <text evidence="10">Belongs to the cation transport ATPase (P-type) (TC 3.A.3) family. Type IIC subfamily.</text>
</comment>
<keyword id="KW-0067">ATP-binding</keyword>
<keyword id="KW-1003">Cell membrane</keyword>
<keyword id="KW-0375">Hydrogen ion transport</keyword>
<keyword id="KW-0406">Ion transport</keyword>
<keyword id="KW-0460">Magnesium</keyword>
<keyword id="KW-0472">Membrane</keyword>
<keyword id="KW-0479">Metal-binding</keyword>
<keyword id="KW-0547">Nucleotide-binding</keyword>
<keyword id="KW-0597">Phosphoprotein</keyword>
<keyword id="KW-0630">Potassium</keyword>
<keyword id="KW-0633">Potassium transport</keyword>
<keyword id="KW-1185">Reference proteome</keyword>
<keyword id="KW-1278">Translocase</keyword>
<keyword id="KW-0812">Transmembrane</keyword>
<keyword id="KW-1133">Transmembrane helix</keyword>
<keyword id="KW-0813">Transport</keyword>
<gene>
    <name type="primary">ATP4A</name>
</gene>
<proteinExistence type="evidence at transcript level"/>